<organism>
    <name type="scientific">Theileria annulata</name>
    <dbReference type="NCBI Taxonomy" id="5874"/>
    <lineage>
        <taxon>Eukaryota</taxon>
        <taxon>Sar</taxon>
        <taxon>Alveolata</taxon>
        <taxon>Apicomplexa</taxon>
        <taxon>Aconoidasida</taxon>
        <taxon>Piroplasmida</taxon>
        <taxon>Theileriidae</taxon>
        <taxon>Theileria</taxon>
    </lineage>
</organism>
<comment type="similarity">
    <text evidence="1">Belongs to the universal ribosomal protein uL22 family.</text>
</comment>
<feature type="chain" id="PRO_0000323422" description="Large ribosomal subunit protein uL22">
    <location>
        <begin position="1"/>
        <end position="187"/>
    </location>
</feature>
<evidence type="ECO:0000305" key="1"/>
<proteinExistence type="inferred from homology"/>
<gene>
    <name type="primary">RPL17</name>
    <name type="ORF">TA14750</name>
</gene>
<dbReference type="EMBL" id="CR940348">
    <property type="protein sequence ID" value="CAI74264.1"/>
    <property type="molecule type" value="Genomic_DNA"/>
</dbReference>
<dbReference type="RefSeq" id="XP_951996.1">
    <property type="nucleotide sequence ID" value="XM_946903.1"/>
</dbReference>
<dbReference type="SMR" id="Q4UF75"/>
<dbReference type="FunCoup" id="Q4UF75">
    <property type="interactions" value="387"/>
</dbReference>
<dbReference type="STRING" id="5874.Q4UF75"/>
<dbReference type="GeneID" id="3862350"/>
<dbReference type="KEGG" id="tan:TA14750"/>
<dbReference type="VEuPathDB" id="PiroplasmaDB:TA14750"/>
<dbReference type="eggNOG" id="KOG3353">
    <property type="taxonomic scope" value="Eukaryota"/>
</dbReference>
<dbReference type="InParanoid" id="Q4UF75"/>
<dbReference type="OMA" id="NTYETAR"/>
<dbReference type="OrthoDB" id="10254664at2759"/>
<dbReference type="Proteomes" id="UP000001950">
    <property type="component" value="Chromosome 2"/>
</dbReference>
<dbReference type="GO" id="GO:0022625">
    <property type="term" value="C:cytosolic large ribosomal subunit"/>
    <property type="evidence" value="ECO:0007669"/>
    <property type="project" value="TreeGrafter"/>
</dbReference>
<dbReference type="GO" id="GO:0003735">
    <property type="term" value="F:structural constituent of ribosome"/>
    <property type="evidence" value="ECO:0007669"/>
    <property type="project" value="InterPro"/>
</dbReference>
<dbReference type="GO" id="GO:0002181">
    <property type="term" value="P:cytoplasmic translation"/>
    <property type="evidence" value="ECO:0007669"/>
    <property type="project" value="TreeGrafter"/>
</dbReference>
<dbReference type="CDD" id="cd00336">
    <property type="entry name" value="Ribosomal_L22"/>
    <property type="match status" value="1"/>
</dbReference>
<dbReference type="FunFam" id="3.90.470.10:FF:000012">
    <property type="entry name" value="60S ribosomal protein L17"/>
    <property type="match status" value="1"/>
</dbReference>
<dbReference type="Gene3D" id="3.90.470.10">
    <property type="entry name" value="Ribosomal protein L22/L17"/>
    <property type="match status" value="1"/>
</dbReference>
<dbReference type="InterPro" id="IPR001063">
    <property type="entry name" value="Ribosomal_uL22"/>
</dbReference>
<dbReference type="InterPro" id="IPR005721">
    <property type="entry name" value="Ribosomal_uL22_euk/arc"/>
</dbReference>
<dbReference type="InterPro" id="IPR036394">
    <property type="entry name" value="Ribosomal_uL22_sf"/>
</dbReference>
<dbReference type="NCBIfam" id="TIGR01038">
    <property type="entry name" value="uL22_arch_euk"/>
    <property type="match status" value="1"/>
</dbReference>
<dbReference type="PANTHER" id="PTHR11593">
    <property type="entry name" value="60S RIBOSOMAL PROTEIN L17"/>
    <property type="match status" value="1"/>
</dbReference>
<dbReference type="PANTHER" id="PTHR11593:SF10">
    <property type="entry name" value="60S RIBOSOMAL PROTEIN L17"/>
    <property type="match status" value="1"/>
</dbReference>
<dbReference type="Pfam" id="PF00237">
    <property type="entry name" value="Ribosomal_L22"/>
    <property type="match status" value="1"/>
</dbReference>
<dbReference type="SUPFAM" id="SSF54843">
    <property type="entry name" value="Ribosomal protein L22"/>
    <property type="match status" value="1"/>
</dbReference>
<name>RL17_THEAN</name>
<sequence>MVKYSREPSNLTRSAKAYGAYLRVHFKNTYETATAIKGMLVKDAKRYLNDVIDRKRCVPFRKFRGGVGRCAQAKAFKHTQGRWPEKSCKFLLDLLKNLESNAEVKGLEQSKLRLEHVQVNRAPVGRRRSYRAHGRIIPFLSHPCHVELIAVEDEDHVPRHTPTEKKVVKMNKRELARMRLRTGRALS</sequence>
<accession>Q4UF75</accession>
<keyword id="KW-1185">Reference proteome</keyword>
<keyword id="KW-0687">Ribonucleoprotein</keyword>
<keyword id="KW-0689">Ribosomal protein</keyword>
<protein>
    <recommendedName>
        <fullName evidence="1">Large ribosomal subunit protein uL22</fullName>
    </recommendedName>
    <alternativeName>
        <fullName>60S ribosomal protein L17</fullName>
    </alternativeName>
</protein>
<reference key="1">
    <citation type="journal article" date="2005" name="Science">
        <title>Genome of the host-cell transforming parasite Theileria annulata compared with T. parva.</title>
        <authorList>
            <person name="Pain A."/>
            <person name="Renauld H."/>
            <person name="Berriman M."/>
            <person name="Murphy L."/>
            <person name="Yeats C.A."/>
            <person name="Weir W."/>
            <person name="Kerhornou A."/>
            <person name="Aslett M."/>
            <person name="Bishop R."/>
            <person name="Bouchier C."/>
            <person name="Cochet M."/>
            <person name="Coulson R.M.R."/>
            <person name="Cronin A."/>
            <person name="de Villiers E.P."/>
            <person name="Fraser A."/>
            <person name="Fosker N."/>
            <person name="Gardner M."/>
            <person name="Goble A."/>
            <person name="Griffiths-Jones S."/>
            <person name="Harris D.E."/>
            <person name="Katzer F."/>
            <person name="Larke N."/>
            <person name="Lord A."/>
            <person name="Maser P."/>
            <person name="McKellar S."/>
            <person name="Mooney P."/>
            <person name="Morton F."/>
            <person name="Nene V."/>
            <person name="O'Neil S."/>
            <person name="Price C."/>
            <person name="Quail M.A."/>
            <person name="Rabbinowitsch E."/>
            <person name="Rawlings N.D."/>
            <person name="Rutter S."/>
            <person name="Saunders D."/>
            <person name="Seeger K."/>
            <person name="Shah T."/>
            <person name="Squares R."/>
            <person name="Squares S."/>
            <person name="Tivey A."/>
            <person name="Walker A.R."/>
            <person name="Woodward J."/>
            <person name="Dobbelaere D.A.E."/>
            <person name="Langsley G."/>
            <person name="Rajandream M.A."/>
            <person name="McKeever D."/>
            <person name="Shiels B."/>
            <person name="Tait A."/>
            <person name="Barrell B.G."/>
            <person name="Hall N."/>
        </authorList>
    </citation>
    <scope>NUCLEOTIDE SEQUENCE [LARGE SCALE GENOMIC DNA]</scope>
    <source>
        <strain>Ankara</strain>
    </source>
</reference>